<gene>
    <name type="primary">ptc1</name>
    <name type="ORF">SPCC4F11.02</name>
</gene>
<comment type="function">
    <text evidence="5 6">Serine and threonine phosphatase (PubMed:8196617, PubMed:9790950). Has a specialized role in the heat shock response (PubMed:8196617). May be responsible for the dephosphorylation of hsp90 (PubMed:8196617).</text>
</comment>
<comment type="catalytic activity">
    <reaction evidence="8 9">
        <text>O-phospho-L-seryl-[protein] + H2O = L-seryl-[protein] + phosphate</text>
        <dbReference type="Rhea" id="RHEA:20629"/>
        <dbReference type="Rhea" id="RHEA-COMP:9863"/>
        <dbReference type="Rhea" id="RHEA-COMP:11604"/>
        <dbReference type="ChEBI" id="CHEBI:15377"/>
        <dbReference type="ChEBI" id="CHEBI:29999"/>
        <dbReference type="ChEBI" id="CHEBI:43474"/>
        <dbReference type="ChEBI" id="CHEBI:83421"/>
        <dbReference type="EC" id="3.1.3.16"/>
    </reaction>
</comment>
<comment type="catalytic activity">
    <reaction evidence="8 9">
        <text>O-phospho-L-threonyl-[protein] + H2O = L-threonyl-[protein] + phosphate</text>
        <dbReference type="Rhea" id="RHEA:47004"/>
        <dbReference type="Rhea" id="RHEA-COMP:11060"/>
        <dbReference type="Rhea" id="RHEA-COMP:11605"/>
        <dbReference type="ChEBI" id="CHEBI:15377"/>
        <dbReference type="ChEBI" id="CHEBI:30013"/>
        <dbReference type="ChEBI" id="CHEBI:43474"/>
        <dbReference type="ChEBI" id="CHEBI:61977"/>
        <dbReference type="EC" id="3.1.3.16"/>
    </reaction>
</comment>
<comment type="cofactor">
    <cofactor evidence="8">
        <name>Mg(2+)</name>
        <dbReference type="ChEBI" id="CHEBI:18420"/>
    </cofactor>
    <cofactor evidence="1">
        <name>Mn(2+)</name>
        <dbReference type="ChEBI" id="CHEBI:29035"/>
    </cofactor>
    <text evidence="1">Binds 2 magnesium or manganese ions per subunit.</text>
</comment>
<comment type="subunit">
    <text>Monomer.</text>
</comment>
<comment type="similarity">
    <text evidence="7">Belongs to the PP2C family.</text>
</comment>
<organism>
    <name type="scientific">Schizosaccharomyces pombe (strain 972 / ATCC 24843)</name>
    <name type="common">Fission yeast</name>
    <dbReference type="NCBI Taxonomy" id="284812"/>
    <lineage>
        <taxon>Eukaryota</taxon>
        <taxon>Fungi</taxon>
        <taxon>Dikarya</taxon>
        <taxon>Ascomycota</taxon>
        <taxon>Taphrinomycotina</taxon>
        <taxon>Schizosaccharomycetes</taxon>
        <taxon>Schizosaccharomycetales</taxon>
        <taxon>Schizosaccharomycetaceae</taxon>
        <taxon>Schizosaccharomyces</taxon>
    </lineage>
</organism>
<accession>P40371</accession>
<keyword id="KW-0378">Hydrolase</keyword>
<keyword id="KW-0460">Magnesium</keyword>
<keyword id="KW-0464">Manganese</keyword>
<keyword id="KW-0479">Metal-binding</keyword>
<keyword id="KW-0904">Protein phosphatase</keyword>
<keyword id="KW-1185">Reference proteome</keyword>
<keyword id="KW-0346">Stress response</keyword>
<proteinExistence type="evidence at protein level"/>
<reference key="1">
    <citation type="journal article" date="1994" name="Mol. Cell. Biol.">
        <title>Protein phosphatase 2C, encoded by ptc1+, is important in the heat shock response of Schizosaccharomyces pombe.</title>
        <authorList>
            <person name="Shiozaki K."/>
            <person name="Akhavan-Niaki H."/>
            <person name="McGowan C.H."/>
            <person name="Russell P."/>
        </authorList>
    </citation>
    <scope>NUCLEOTIDE SEQUENCE [MRNA]</scope>
    <scope>FUNCTION</scope>
    <scope>CATALYTIC ACTIVITY</scope>
    <scope>COFACTOR</scope>
    <source>
        <strain>972 / ATCC 24843</strain>
    </source>
</reference>
<reference key="2">
    <citation type="journal article" date="2002" name="Nature">
        <title>The genome sequence of Schizosaccharomyces pombe.</title>
        <authorList>
            <person name="Wood V."/>
            <person name="Gwilliam R."/>
            <person name="Rajandream M.A."/>
            <person name="Lyne M.H."/>
            <person name="Lyne R."/>
            <person name="Stewart A."/>
            <person name="Sgouros J.G."/>
            <person name="Peat N."/>
            <person name="Hayles J."/>
            <person name="Baker S.G."/>
            <person name="Basham D."/>
            <person name="Bowman S."/>
            <person name="Brooks K."/>
            <person name="Brown D."/>
            <person name="Brown S."/>
            <person name="Chillingworth T."/>
            <person name="Churcher C.M."/>
            <person name="Collins M."/>
            <person name="Connor R."/>
            <person name="Cronin A."/>
            <person name="Davis P."/>
            <person name="Feltwell T."/>
            <person name="Fraser A."/>
            <person name="Gentles S."/>
            <person name="Goble A."/>
            <person name="Hamlin N."/>
            <person name="Harris D.E."/>
            <person name="Hidalgo J."/>
            <person name="Hodgson G."/>
            <person name="Holroyd S."/>
            <person name="Hornsby T."/>
            <person name="Howarth S."/>
            <person name="Huckle E.J."/>
            <person name="Hunt S."/>
            <person name="Jagels K."/>
            <person name="James K.D."/>
            <person name="Jones L."/>
            <person name="Jones M."/>
            <person name="Leather S."/>
            <person name="McDonald S."/>
            <person name="McLean J."/>
            <person name="Mooney P."/>
            <person name="Moule S."/>
            <person name="Mungall K.L."/>
            <person name="Murphy L.D."/>
            <person name="Niblett D."/>
            <person name="Odell C."/>
            <person name="Oliver K."/>
            <person name="O'Neil S."/>
            <person name="Pearson D."/>
            <person name="Quail M.A."/>
            <person name="Rabbinowitsch E."/>
            <person name="Rutherford K.M."/>
            <person name="Rutter S."/>
            <person name="Saunders D."/>
            <person name="Seeger K."/>
            <person name="Sharp S."/>
            <person name="Skelton J."/>
            <person name="Simmonds M.N."/>
            <person name="Squares R."/>
            <person name="Squares S."/>
            <person name="Stevens K."/>
            <person name="Taylor K."/>
            <person name="Taylor R.G."/>
            <person name="Tivey A."/>
            <person name="Walsh S.V."/>
            <person name="Warren T."/>
            <person name="Whitehead S."/>
            <person name="Woodward J.R."/>
            <person name="Volckaert G."/>
            <person name="Aert R."/>
            <person name="Robben J."/>
            <person name="Grymonprez B."/>
            <person name="Weltjens I."/>
            <person name="Vanstreels E."/>
            <person name="Rieger M."/>
            <person name="Schaefer M."/>
            <person name="Mueller-Auer S."/>
            <person name="Gabel C."/>
            <person name="Fuchs M."/>
            <person name="Duesterhoeft A."/>
            <person name="Fritzc C."/>
            <person name="Holzer E."/>
            <person name="Moestl D."/>
            <person name="Hilbert H."/>
            <person name="Borzym K."/>
            <person name="Langer I."/>
            <person name="Beck A."/>
            <person name="Lehrach H."/>
            <person name="Reinhardt R."/>
            <person name="Pohl T.M."/>
            <person name="Eger P."/>
            <person name="Zimmermann W."/>
            <person name="Wedler H."/>
            <person name="Wambutt R."/>
            <person name="Purnelle B."/>
            <person name="Goffeau A."/>
            <person name="Cadieu E."/>
            <person name="Dreano S."/>
            <person name="Gloux S."/>
            <person name="Lelaure V."/>
            <person name="Mottier S."/>
            <person name="Galibert F."/>
            <person name="Aves S.J."/>
            <person name="Xiang Z."/>
            <person name="Hunt C."/>
            <person name="Moore K."/>
            <person name="Hurst S.M."/>
            <person name="Lucas M."/>
            <person name="Rochet M."/>
            <person name="Gaillardin C."/>
            <person name="Tallada V.A."/>
            <person name="Garzon A."/>
            <person name="Thode G."/>
            <person name="Daga R.R."/>
            <person name="Cruzado L."/>
            <person name="Jimenez J."/>
            <person name="Sanchez M."/>
            <person name="del Rey F."/>
            <person name="Benito J."/>
            <person name="Dominguez A."/>
            <person name="Revuelta J.L."/>
            <person name="Moreno S."/>
            <person name="Armstrong J."/>
            <person name="Forsburg S.L."/>
            <person name="Cerutti L."/>
            <person name="Lowe T."/>
            <person name="McCombie W.R."/>
            <person name="Paulsen I."/>
            <person name="Potashkin J."/>
            <person name="Shpakovski G.V."/>
            <person name="Ussery D."/>
            <person name="Barrell B.G."/>
            <person name="Nurse P."/>
        </authorList>
    </citation>
    <scope>NUCLEOTIDE SEQUENCE [LARGE SCALE GENOMIC DNA]</scope>
    <source>
        <strain>972 / ATCC 24843</strain>
    </source>
</reference>
<reference key="3">
    <citation type="journal article" date="1998" name="Biochem. Biophys. Res. Commun.">
        <title>Isoform-specific phosphorylation of fission yeast type 2C protein phosphatase.</title>
        <authorList>
            <person name="Kobayashi T."/>
            <person name="Sadaie M."/>
            <person name="Ohnishi M."/>
            <person name="Wang H."/>
            <person name="Ikeda S."/>
            <person name="Hanada M."/>
            <person name="Yanagawa Y."/>
            <person name="Nakajima T."/>
            <person name="Tamura S."/>
        </authorList>
    </citation>
    <scope>FUNCTION</scope>
    <scope>CATALYTIC ACTIVITY</scope>
</reference>
<protein>
    <recommendedName>
        <fullName>Protein phosphatase 2C homolog 1</fullName>
        <shortName>PP2C-1</shortName>
        <ecNumber evidence="8 9">3.1.3.16</ecNumber>
    </recommendedName>
</protein>
<name>PP2C1_SCHPO</name>
<dbReference type="EC" id="3.1.3.16" evidence="8 9"/>
<dbReference type="EMBL" id="L26970">
    <property type="protein sequence ID" value="AAA35327.1"/>
    <property type="molecule type" value="mRNA"/>
</dbReference>
<dbReference type="EMBL" id="CU329672">
    <property type="protein sequence ID" value="CAB55768.1"/>
    <property type="molecule type" value="Genomic_DNA"/>
</dbReference>
<dbReference type="PIR" id="A56058">
    <property type="entry name" value="A56058"/>
</dbReference>
<dbReference type="RefSeq" id="NP_588401.1">
    <property type="nucleotide sequence ID" value="NM_001023392.2"/>
</dbReference>
<dbReference type="SMR" id="P40371"/>
<dbReference type="BioGRID" id="276058">
    <property type="interactions" value="323"/>
</dbReference>
<dbReference type="FunCoup" id="P40371">
    <property type="interactions" value="85"/>
</dbReference>
<dbReference type="IntAct" id="P40371">
    <property type="interactions" value="6"/>
</dbReference>
<dbReference type="STRING" id="284812.P40371"/>
<dbReference type="iPTMnet" id="P40371"/>
<dbReference type="PaxDb" id="4896-SPCC4F11.02.1"/>
<dbReference type="EnsemblFungi" id="SPCC4F11.02.1">
    <property type="protein sequence ID" value="SPCC4F11.02.1:pep"/>
    <property type="gene ID" value="SPCC4F11.02"/>
</dbReference>
<dbReference type="GeneID" id="2539495"/>
<dbReference type="KEGG" id="spo:2539495"/>
<dbReference type="PomBase" id="SPCC4F11.02">
    <property type="gene designation" value="ptc1"/>
</dbReference>
<dbReference type="VEuPathDB" id="FungiDB:SPCC4F11.02"/>
<dbReference type="eggNOG" id="KOG0698">
    <property type="taxonomic scope" value="Eukaryota"/>
</dbReference>
<dbReference type="HOGENOM" id="CLU_013173_1_1_1"/>
<dbReference type="InParanoid" id="P40371"/>
<dbReference type="OMA" id="IDDQEAC"/>
<dbReference type="PhylomeDB" id="P40371"/>
<dbReference type="PRO" id="PR:P40371"/>
<dbReference type="Proteomes" id="UP000002485">
    <property type="component" value="Chromosome III"/>
</dbReference>
<dbReference type="GO" id="GO:0005737">
    <property type="term" value="C:cytoplasm"/>
    <property type="evidence" value="ECO:0000318"/>
    <property type="project" value="GO_Central"/>
</dbReference>
<dbReference type="GO" id="GO:0005829">
    <property type="term" value="C:cytosol"/>
    <property type="evidence" value="ECO:0007005"/>
    <property type="project" value="PomBase"/>
</dbReference>
<dbReference type="GO" id="GO:0005634">
    <property type="term" value="C:nucleus"/>
    <property type="evidence" value="ECO:0007005"/>
    <property type="project" value="PomBase"/>
</dbReference>
<dbReference type="GO" id="GO:1990439">
    <property type="term" value="F:MAP kinase serine/threonine phosphatase activity"/>
    <property type="evidence" value="ECO:0000314"/>
    <property type="project" value="PomBase"/>
</dbReference>
<dbReference type="GO" id="GO:0046872">
    <property type="term" value="F:metal ion binding"/>
    <property type="evidence" value="ECO:0007669"/>
    <property type="project" value="UniProtKB-KW"/>
</dbReference>
<dbReference type="GO" id="GO:0004722">
    <property type="term" value="F:protein serine/threonine phosphatase activity"/>
    <property type="evidence" value="ECO:0000314"/>
    <property type="project" value="UniProtKB"/>
</dbReference>
<dbReference type="GO" id="GO:0071470">
    <property type="term" value="P:cellular response to osmotic stress"/>
    <property type="evidence" value="ECO:0000315"/>
    <property type="project" value="PomBase"/>
</dbReference>
<dbReference type="GO" id="GO:0043409">
    <property type="term" value="P:negative regulation of MAPK cascade"/>
    <property type="evidence" value="ECO:0000318"/>
    <property type="project" value="GO_Central"/>
</dbReference>
<dbReference type="GO" id="GO:1903753">
    <property type="term" value="P:negative regulation of p38MAPK cascade"/>
    <property type="evidence" value="ECO:0000315"/>
    <property type="project" value="PomBase"/>
</dbReference>
<dbReference type="GO" id="GO:0007165">
    <property type="term" value="P:signal transduction"/>
    <property type="evidence" value="ECO:0000318"/>
    <property type="project" value="GO_Central"/>
</dbReference>
<dbReference type="CDD" id="cd00143">
    <property type="entry name" value="PP2Cc"/>
    <property type="match status" value="1"/>
</dbReference>
<dbReference type="FunFam" id="3.60.40.10:FF:000169">
    <property type="entry name" value="Phosphatase 2C-like domain-containing protein"/>
    <property type="match status" value="1"/>
</dbReference>
<dbReference type="Gene3D" id="3.60.40.10">
    <property type="entry name" value="PPM-type phosphatase domain"/>
    <property type="match status" value="1"/>
</dbReference>
<dbReference type="InterPro" id="IPR015655">
    <property type="entry name" value="PP2C"/>
</dbReference>
<dbReference type="InterPro" id="IPR000222">
    <property type="entry name" value="PP2C_BS"/>
</dbReference>
<dbReference type="InterPro" id="IPR036457">
    <property type="entry name" value="PPM-type-like_dom_sf"/>
</dbReference>
<dbReference type="InterPro" id="IPR001932">
    <property type="entry name" value="PPM-type_phosphatase-like_dom"/>
</dbReference>
<dbReference type="PANTHER" id="PTHR13832">
    <property type="entry name" value="PROTEIN PHOSPHATASE 2C"/>
    <property type="match status" value="1"/>
</dbReference>
<dbReference type="PANTHER" id="PTHR13832:SF837">
    <property type="entry name" value="PROTEIN PHOSPHATASE 2C-LIKE DOMAIN-CONTAINING PROTEIN 1"/>
    <property type="match status" value="1"/>
</dbReference>
<dbReference type="Pfam" id="PF00481">
    <property type="entry name" value="PP2C"/>
    <property type="match status" value="1"/>
</dbReference>
<dbReference type="SMART" id="SM00332">
    <property type="entry name" value="PP2Cc"/>
    <property type="match status" value="1"/>
</dbReference>
<dbReference type="SUPFAM" id="SSF81606">
    <property type="entry name" value="PP2C-like"/>
    <property type="match status" value="1"/>
</dbReference>
<dbReference type="PROSITE" id="PS01032">
    <property type="entry name" value="PPM_1"/>
    <property type="match status" value="1"/>
</dbReference>
<dbReference type="PROSITE" id="PS51746">
    <property type="entry name" value="PPM_2"/>
    <property type="match status" value="1"/>
</dbReference>
<feature type="chain" id="PRO_0000057770" description="Protein phosphatase 2C homolog 1">
    <location>
        <begin position="1"/>
        <end position="347"/>
    </location>
</feature>
<feature type="domain" description="PPM-type phosphatase" evidence="3">
    <location>
        <begin position="71"/>
        <end position="323"/>
    </location>
</feature>
<feature type="region of interest" description="Disordered" evidence="4">
    <location>
        <begin position="1"/>
        <end position="41"/>
    </location>
</feature>
<feature type="compositionally biased region" description="Basic and acidic residues" evidence="4">
    <location>
        <begin position="32"/>
        <end position="41"/>
    </location>
</feature>
<feature type="binding site" evidence="2">
    <location>
        <position position="109"/>
    </location>
    <ligand>
        <name>Mn(2+)</name>
        <dbReference type="ChEBI" id="CHEBI:29035"/>
        <label>1</label>
    </ligand>
</feature>
<feature type="binding site" evidence="2">
    <location>
        <position position="109"/>
    </location>
    <ligand>
        <name>Mn(2+)</name>
        <dbReference type="ChEBI" id="CHEBI:29035"/>
        <label>2</label>
    </ligand>
</feature>
<feature type="binding site" evidence="2">
    <location>
        <position position="110"/>
    </location>
    <ligand>
        <name>Mn(2+)</name>
        <dbReference type="ChEBI" id="CHEBI:29035"/>
        <label>1</label>
    </ligand>
</feature>
<feature type="binding site" evidence="2">
    <location>
        <position position="275"/>
    </location>
    <ligand>
        <name>Mn(2+)</name>
        <dbReference type="ChEBI" id="CHEBI:29035"/>
        <label>2</label>
    </ligand>
</feature>
<feature type="binding site" evidence="2">
    <location>
        <position position="314"/>
    </location>
    <ligand>
        <name>Mn(2+)</name>
        <dbReference type="ChEBI" id="CHEBI:29035"/>
        <label>2</label>
    </ligand>
</feature>
<sequence length="347" mass="38676">MKGSHPNAGSLLEPLHKLNPFSENSTSGHRKNASDHSADGETRPIAIEMKDSKGNTVPVGNSRPSKASNWLAGLMEDKNQRWRRSMEDTHICLYDFGGNQDDGFVAVYDGHAGIQASDYCQKNLHKVLLEKVRNEPDRLVTDLMDETFVEVNSKIAKATHNDICGCTAAVAFFRYEKNRTRRVLYTANAGDARIVLCRDGKAIRLSYDHKGSDANESRRVTQLGGLMVQNRINGVLAVTRALGDTYLKELVSAHPFTTETRIWNGHDEFFIIACDGLWDVVSDQEAVDFVRNFVSPREAAVRLVEFALKRLSTDNITCIVVNLTRNPGDLDDSGLTADNDSYSNDYY</sequence>
<evidence type="ECO:0000250" key="1"/>
<evidence type="ECO:0000250" key="2">
    <source>
        <dbReference type="UniProtKB" id="P35813"/>
    </source>
</evidence>
<evidence type="ECO:0000255" key="3">
    <source>
        <dbReference type="PROSITE-ProRule" id="PRU01082"/>
    </source>
</evidence>
<evidence type="ECO:0000256" key="4">
    <source>
        <dbReference type="SAM" id="MobiDB-lite"/>
    </source>
</evidence>
<evidence type="ECO:0000269" key="5">
    <source>
    </source>
</evidence>
<evidence type="ECO:0000269" key="6">
    <source>
    </source>
</evidence>
<evidence type="ECO:0000305" key="7"/>
<evidence type="ECO:0000305" key="8">
    <source>
    </source>
</evidence>
<evidence type="ECO:0000305" key="9">
    <source>
    </source>
</evidence>